<name>SET6_SCHPO</name>
<feature type="chain" id="PRO_0000316541" description="SET domain and MYND-type zinc finger protein 6">
    <location>
        <begin position="1"/>
        <end position="483"/>
    </location>
</feature>
<feature type="domain" description="SET" evidence="2">
    <location>
        <begin position="4"/>
        <end position="228"/>
    </location>
</feature>
<feature type="zinc finger region" description="MYND-type" evidence="1">
    <location>
        <begin position="49"/>
        <end position="87"/>
    </location>
</feature>
<feature type="binding site" evidence="1">
    <location>
        <position position="49"/>
    </location>
    <ligand>
        <name>Zn(2+)</name>
        <dbReference type="ChEBI" id="CHEBI:29105"/>
        <label>1</label>
    </ligand>
</feature>
<feature type="binding site" evidence="1">
    <location>
        <position position="52"/>
    </location>
    <ligand>
        <name>Zn(2+)</name>
        <dbReference type="ChEBI" id="CHEBI:29105"/>
        <label>1</label>
    </ligand>
</feature>
<feature type="binding site" evidence="1">
    <location>
        <position position="62"/>
    </location>
    <ligand>
        <name>Zn(2+)</name>
        <dbReference type="ChEBI" id="CHEBI:29105"/>
        <label>2</label>
    </ligand>
</feature>
<feature type="binding site" evidence="1">
    <location>
        <position position="65"/>
    </location>
    <ligand>
        <name>Zn(2+)</name>
        <dbReference type="ChEBI" id="CHEBI:29105"/>
        <label>2</label>
    </ligand>
</feature>
<feature type="binding site" evidence="1">
    <location>
        <position position="71"/>
    </location>
    <ligand>
        <name>Zn(2+)</name>
        <dbReference type="ChEBI" id="CHEBI:29105"/>
        <label>1</label>
    </ligand>
</feature>
<feature type="binding site" evidence="1">
    <location>
        <position position="75"/>
    </location>
    <ligand>
        <name>Zn(2+)</name>
        <dbReference type="ChEBI" id="CHEBI:29105"/>
        <label>1</label>
    </ligand>
</feature>
<feature type="binding site" evidence="1">
    <location>
        <position position="83"/>
    </location>
    <ligand>
        <name>Zn(2+)</name>
        <dbReference type="ChEBI" id="CHEBI:29105"/>
        <label>2</label>
    </ligand>
</feature>
<feature type="binding site" evidence="1">
    <location>
        <position position="87"/>
    </location>
    <ligand>
        <name>Zn(2+)</name>
        <dbReference type="ChEBI" id="CHEBI:29105"/>
        <label>2</label>
    </ligand>
</feature>
<dbReference type="EC" id="2.1.1.-"/>
<dbReference type="EMBL" id="CU329671">
    <property type="protein sequence ID" value="CAA21792.1"/>
    <property type="molecule type" value="Genomic_DNA"/>
</dbReference>
<dbReference type="PIR" id="T40801">
    <property type="entry name" value="T40801"/>
</dbReference>
<dbReference type="RefSeq" id="NP_596514.1">
    <property type="nucleotide sequence ID" value="NM_001022435.2"/>
</dbReference>
<dbReference type="SMR" id="O94256"/>
<dbReference type="BioGRID" id="277881">
    <property type="interactions" value="25"/>
</dbReference>
<dbReference type="FunCoup" id="O94256">
    <property type="interactions" value="295"/>
</dbReference>
<dbReference type="STRING" id="284812.O94256"/>
<dbReference type="PaxDb" id="4896-SPBP8B7.07c.1"/>
<dbReference type="EnsemblFungi" id="SPBP8B7.07c.1">
    <property type="protein sequence ID" value="SPBP8B7.07c.1:pep"/>
    <property type="gene ID" value="SPBP8B7.07c"/>
</dbReference>
<dbReference type="GeneID" id="2541370"/>
<dbReference type="KEGG" id="spo:2541370"/>
<dbReference type="PomBase" id="SPBP8B7.07c">
    <property type="gene designation" value="set6"/>
</dbReference>
<dbReference type="VEuPathDB" id="FungiDB:SPBP8B7.07c"/>
<dbReference type="eggNOG" id="KOG2084">
    <property type="taxonomic scope" value="Eukaryota"/>
</dbReference>
<dbReference type="HOGENOM" id="CLU_568774_0_0_1"/>
<dbReference type="InParanoid" id="O94256"/>
<dbReference type="OMA" id="ACKDYLM"/>
<dbReference type="PhylomeDB" id="O94256"/>
<dbReference type="Reactome" id="R-SPO-3214841">
    <property type="pathway name" value="PKMTs methylate histone lysines"/>
</dbReference>
<dbReference type="PRO" id="PR:O94256"/>
<dbReference type="Proteomes" id="UP000002485">
    <property type="component" value="Chromosome II"/>
</dbReference>
<dbReference type="GO" id="GO:0000785">
    <property type="term" value="C:chromatin"/>
    <property type="evidence" value="ECO:0000305"/>
    <property type="project" value="PomBase"/>
</dbReference>
<dbReference type="GO" id="GO:0005829">
    <property type="term" value="C:cytosol"/>
    <property type="evidence" value="ECO:0007005"/>
    <property type="project" value="PomBase"/>
</dbReference>
<dbReference type="GO" id="GO:0005634">
    <property type="term" value="C:nucleus"/>
    <property type="evidence" value="ECO:0007005"/>
    <property type="project" value="PomBase"/>
</dbReference>
<dbReference type="GO" id="GO:0042054">
    <property type="term" value="F:histone methyltransferase activity"/>
    <property type="evidence" value="ECO:0000255"/>
    <property type="project" value="PomBase"/>
</dbReference>
<dbReference type="GO" id="GO:0008270">
    <property type="term" value="F:zinc ion binding"/>
    <property type="evidence" value="ECO:0007669"/>
    <property type="project" value="UniProtKB-KW"/>
</dbReference>
<dbReference type="GO" id="GO:0006338">
    <property type="term" value="P:chromatin remodeling"/>
    <property type="evidence" value="ECO:0000303"/>
    <property type="project" value="PomBase"/>
</dbReference>
<dbReference type="GO" id="GO:0032259">
    <property type="term" value="P:methylation"/>
    <property type="evidence" value="ECO:0007669"/>
    <property type="project" value="UniProtKB-KW"/>
</dbReference>
<dbReference type="CDD" id="cd20071">
    <property type="entry name" value="SET_SMYD"/>
    <property type="match status" value="1"/>
</dbReference>
<dbReference type="Gene3D" id="1.10.220.160">
    <property type="match status" value="1"/>
</dbReference>
<dbReference type="Gene3D" id="6.10.140.2220">
    <property type="match status" value="1"/>
</dbReference>
<dbReference type="Gene3D" id="2.170.270.10">
    <property type="entry name" value="SET domain"/>
    <property type="match status" value="1"/>
</dbReference>
<dbReference type="InterPro" id="IPR050869">
    <property type="entry name" value="H3K4_H4K5_MeTrfase"/>
</dbReference>
<dbReference type="InterPro" id="IPR001214">
    <property type="entry name" value="SET_dom"/>
</dbReference>
<dbReference type="InterPro" id="IPR046341">
    <property type="entry name" value="SET_dom_sf"/>
</dbReference>
<dbReference type="InterPro" id="IPR002893">
    <property type="entry name" value="Znf_MYND"/>
</dbReference>
<dbReference type="PANTHER" id="PTHR12197:SF251">
    <property type="entry name" value="EG:BACR7C10.4 PROTEIN"/>
    <property type="match status" value="1"/>
</dbReference>
<dbReference type="PANTHER" id="PTHR12197">
    <property type="entry name" value="HISTONE-LYSINE N-METHYLTRANSFERASE SMYD"/>
    <property type="match status" value="1"/>
</dbReference>
<dbReference type="Pfam" id="PF00856">
    <property type="entry name" value="SET"/>
    <property type="match status" value="1"/>
</dbReference>
<dbReference type="Pfam" id="PF01753">
    <property type="entry name" value="zf-MYND"/>
    <property type="match status" value="1"/>
</dbReference>
<dbReference type="SMART" id="SM00317">
    <property type="entry name" value="SET"/>
    <property type="match status" value="1"/>
</dbReference>
<dbReference type="SUPFAM" id="SSF82199">
    <property type="entry name" value="SET domain"/>
    <property type="match status" value="1"/>
</dbReference>
<dbReference type="PROSITE" id="PS50280">
    <property type="entry name" value="SET"/>
    <property type="match status" value="1"/>
</dbReference>
<dbReference type="PROSITE" id="PS01360">
    <property type="entry name" value="ZF_MYND_1"/>
    <property type="match status" value="1"/>
</dbReference>
<dbReference type="PROSITE" id="PS50865">
    <property type="entry name" value="ZF_MYND_2"/>
    <property type="match status" value="1"/>
</dbReference>
<accession>O94256</accession>
<gene>
    <name type="primary">set6</name>
    <name type="ORF">SPBP8B7.07c</name>
</gene>
<reference key="1">
    <citation type="journal article" date="2002" name="Nature">
        <title>The genome sequence of Schizosaccharomyces pombe.</title>
        <authorList>
            <person name="Wood V."/>
            <person name="Gwilliam R."/>
            <person name="Rajandream M.A."/>
            <person name="Lyne M.H."/>
            <person name="Lyne R."/>
            <person name="Stewart A."/>
            <person name="Sgouros J.G."/>
            <person name="Peat N."/>
            <person name="Hayles J."/>
            <person name="Baker S.G."/>
            <person name="Basham D."/>
            <person name="Bowman S."/>
            <person name="Brooks K."/>
            <person name="Brown D."/>
            <person name="Brown S."/>
            <person name="Chillingworth T."/>
            <person name="Churcher C.M."/>
            <person name="Collins M."/>
            <person name="Connor R."/>
            <person name="Cronin A."/>
            <person name="Davis P."/>
            <person name="Feltwell T."/>
            <person name="Fraser A."/>
            <person name="Gentles S."/>
            <person name="Goble A."/>
            <person name="Hamlin N."/>
            <person name="Harris D.E."/>
            <person name="Hidalgo J."/>
            <person name="Hodgson G."/>
            <person name="Holroyd S."/>
            <person name="Hornsby T."/>
            <person name="Howarth S."/>
            <person name="Huckle E.J."/>
            <person name="Hunt S."/>
            <person name="Jagels K."/>
            <person name="James K.D."/>
            <person name="Jones L."/>
            <person name="Jones M."/>
            <person name="Leather S."/>
            <person name="McDonald S."/>
            <person name="McLean J."/>
            <person name="Mooney P."/>
            <person name="Moule S."/>
            <person name="Mungall K.L."/>
            <person name="Murphy L.D."/>
            <person name="Niblett D."/>
            <person name="Odell C."/>
            <person name="Oliver K."/>
            <person name="O'Neil S."/>
            <person name="Pearson D."/>
            <person name="Quail M.A."/>
            <person name="Rabbinowitsch E."/>
            <person name="Rutherford K.M."/>
            <person name="Rutter S."/>
            <person name="Saunders D."/>
            <person name="Seeger K."/>
            <person name="Sharp S."/>
            <person name="Skelton J."/>
            <person name="Simmonds M.N."/>
            <person name="Squares R."/>
            <person name="Squares S."/>
            <person name="Stevens K."/>
            <person name="Taylor K."/>
            <person name="Taylor R.G."/>
            <person name="Tivey A."/>
            <person name="Walsh S.V."/>
            <person name="Warren T."/>
            <person name="Whitehead S."/>
            <person name="Woodward J.R."/>
            <person name="Volckaert G."/>
            <person name="Aert R."/>
            <person name="Robben J."/>
            <person name="Grymonprez B."/>
            <person name="Weltjens I."/>
            <person name="Vanstreels E."/>
            <person name="Rieger M."/>
            <person name="Schaefer M."/>
            <person name="Mueller-Auer S."/>
            <person name="Gabel C."/>
            <person name="Fuchs M."/>
            <person name="Duesterhoeft A."/>
            <person name="Fritzc C."/>
            <person name="Holzer E."/>
            <person name="Moestl D."/>
            <person name="Hilbert H."/>
            <person name="Borzym K."/>
            <person name="Langer I."/>
            <person name="Beck A."/>
            <person name="Lehrach H."/>
            <person name="Reinhardt R."/>
            <person name="Pohl T.M."/>
            <person name="Eger P."/>
            <person name="Zimmermann W."/>
            <person name="Wedler H."/>
            <person name="Wambutt R."/>
            <person name="Purnelle B."/>
            <person name="Goffeau A."/>
            <person name="Cadieu E."/>
            <person name="Dreano S."/>
            <person name="Gloux S."/>
            <person name="Lelaure V."/>
            <person name="Mottier S."/>
            <person name="Galibert F."/>
            <person name="Aves S.J."/>
            <person name="Xiang Z."/>
            <person name="Hunt C."/>
            <person name="Moore K."/>
            <person name="Hurst S.M."/>
            <person name="Lucas M."/>
            <person name="Rochet M."/>
            <person name="Gaillardin C."/>
            <person name="Tallada V.A."/>
            <person name="Garzon A."/>
            <person name="Thode G."/>
            <person name="Daga R.R."/>
            <person name="Cruzado L."/>
            <person name="Jimenez J."/>
            <person name="Sanchez M."/>
            <person name="del Rey F."/>
            <person name="Benito J."/>
            <person name="Dominguez A."/>
            <person name="Revuelta J.L."/>
            <person name="Moreno S."/>
            <person name="Armstrong J."/>
            <person name="Forsburg S.L."/>
            <person name="Cerutti L."/>
            <person name="Lowe T."/>
            <person name="McCombie W.R."/>
            <person name="Paulsen I."/>
            <person name="Potashkin J."/>
            <person name="Shpakovski G.V."/>
            <person name="Ussery D."/>
            <person name="Barrell B.G."/>
            <person name="Nurse P."/>
        </authorList>
    </citation>
    <scope>NUCLEOTIDE SEQUENCE [LARGE SCALE GENOMIC DNA]</scope>
    <source>
        <strain>972 / ATCC 24843</strain>
    </source>
</reference>
<reference key="2">
    <citation type="journal article" date="2006" name="Nat. Biotechnol.">
        <title>ORFeome cloning and global analysis of protein localization in the fission yeast Schizosaccharomyces pombe.</title>
        <authorList>
            <person name="Matsuyama A."/>
            <person name="Arai R."/>
            <person name="Yashiroda Y."/>
            <person name="Shirai A."/>
            <person name="Kamata A."/>
            <person name="Sekido S."/>
            <person name="Kobayashi Y."/>
            <person name="Hashimoto A."/>
            <person name="Hamamoto M."/>
            <person name="Hiraoka Y."/>
            <person name="Horinouchi S."/>
            <person name="Yoshida M."/>
        </authorList>
    </citation>
    <scope>SUBCELLULAR LOCATION [LARGE SCALE ANALYSIS]</scope>
</reference>
<proteinExistence type="inferred from homology"/>
<keyword id="KW-0963">Cytoplasm</keyword>
<keyword id="KW-0479">Metal-binding</keyword>
<keyword id="KW-0489">Methyltransferase</keyword>
<keyword id="KW-0539">Nucleus</keyword>
<keyword id="KW-1185">Reference proteome</keyword>
<keyword id="KW-0949">S-adenosyl-L-methionine</keyword>
<keyword id="KW-0808">Transferase</keyword>
<keyword id="KW-0862">Zinc</keyword>
<keyword id="KW-0863">Zinc-finger</keyword>
<evidence type="ECO:0000255" key="1">
    <source>
        <dbReference type="PROSITE-ProRule" id="PRU00134"/>
    </source>
</evidence>
<evidence type="ECO:0000255" key="2">
    <source>
        <dbReference type="PROSITE-ProRule" id="PRU00190"/>
    </source>
</evidence>
<evidence type="ECO:0000269" key="3">
    <source>
    </source>
</evidence>
<protein>
    <recommendedName>
        <fullName>SET domain and MYND-type zinc finger protein 6</fullName>
        <ecNumber>2.1.1.-</ecNumber>
    </recommendedName>
</protein>
<sequence length="483" mass="55047">MDAPLIASVILPEFGKGTVATDNIPIGKIIIRKRVDILSLDSANLTRTCSTCTEEKVKTQRCAACKIIHYCSKGCQKADWPFHKLECKALQASKQNGILPSVCRLLIRLYLLWQKNPAIIEPMEGHQNEFQAVSSSWSDAELIASAASHYTQIYQAELFQKLFCRLAVNAMNLVTSSFDSLGMCLDTILCRLNHSCDPNCQIIFDGAIVQLVSKRDIKKDEQLFISYIDIRLPKSIRQKQLLKKYFFSCYCPRCENDHTTKETDGSKWMGRLRNSKSLMKNLAMARDLWSCGWKQTAFPWSNLLHHIKLGMLDESNFNGAFAALYLKSSADEFLDALHVVDEYQLLLLGKQVAMEVKHLMFPNDKPLEMEFPSSSQPQQTVPTNNSLFLLKNIPSFGGLHHCILGRYSISLDDFVLWLLDRAQRLQQAVRISHPSTTFCSNVENDIKEIFEVCKDYCMLHVQNNLKAFEEKLWAACKDFLVTY</sequence>
<comment type="subcellular location">
    <subcellularLocation>
        <location evidence="3">Cytoplasm</location>
    </subcellularLocation>
    <subcellularLocation>
        <location evidence="3">Nucleus</location>
    </subcellularLocation>
    <text>Localizes to chromatin.</text>
</comment>
<comment type="similarity">
    <text evidence="2">Belongs to the class V-like SAM-binding methyltransferase superfamily.</text>
</comment>
<organism>
    <name type="scientific">Schizosaccharomyces pombe (strain 972 / ATCC 24843)</name>
    <name type="common">Fission yeast</name>
    <dbReference type="NCBI Taxonomy" id="284812"/>
    <lineage>
        <taxon>Eukaryota</taxon>
        <taxon>Fungi</taxon>
        <taxon>Dikarya</taxon>
        <taxon>Ascomycota</taxon>
        <taxon>Taphrinomycotina</taxon>
        <taxon>Schizosaccharomycetes</taxon>
        <taxon>Schizosaccharomycetales</taxon>
        <taxon>Schizosaccharomycetaceae</taxon>
        <taxon>Schizosaccharomyces</taxon>
    </lineage>
</organism>